<feature type="transit peptide" description="Mitochondrion" evidence="6">
    <location>
        <begin position="1"/>
        <end position="14"/>
    </location>
</feature>
<feature type="chain" id="PRO_0000000892" description="Enoyl-[acyl-carrier-protein] reductase, mitochondrial">
    <location>
        <begin position="15"/>
        <end position="344"/>
    </location>
</feature>
<feature type="active site" description="Proton donor" evidence="2">
    <location>
        <position position="69"/>
    </location>
</feature>
<feature type="binding site" evidence="2">
    <location>
        <position position="142"/>
    </location>
    <ligand>
        <name>NADP(+)</name>
        <dbReference type="ChEBI" id="CHEBI:58349"/>
    </ligand>
</feature>
<feature type="binding site" evidence="2">
    <location>
        <begin position="168"/>
        <end position="171"/>
    </location>
    <ligand>
        <name>NADP(+)</name>
        <dbReference type="ChEBI" id="CHEBI:58349"/>
    </ligand>
</feature>
<feature type="binding site" evidence="2">
    <location>
        <begin position="191"/>
        <end position="193"/>
    </location>
    <ligand>
        <name>NADP(+)</name>
        <dbReference type="ChEBI" id="CHEBI:58349"/>
    </ligand>
</feature>
<feature type="binding site" evidence="2">
    <location>
        <begin position="255"/>
        <end position="258"/>
    </location>
    <ligand>
        <name>NADP(+)</name>
        <dbReference type="ChEBI" id="CHEBI:58349"/>
    </ligand>
</feature>
<feature type="binding site" evidence="2">
    <location>
        <begin position="280"/>
        <end position="282"/>
    </location>
    <ligand>
        <name>NADP(+)</name>
        <dbReference type="ChEBI" id="CHEBI:58349"/>
    </ligand>
</feature>
<feature type="binding site" evidence="1">
    <location>
        <position position="338"/>
    </location>
    <ligand>
        <name>NADP(+)</name>
        <dbReference type="ChEBI" id="CHEBI:58349"/>
    </ligand>
</feature>
<sequence>MLKVLSLRSALQRAASTRQLVYEGYRNPPEAIQLKTVTIADKPSADQVLVQWIAAPINPADLNQIQGVYPVKPALPAVGGNEGFGKVISVGSNVSSIKVGDHVIPDRSGLGTWRELGLHQENDLFPIDNTLSMEYAATFQVNPPTAYRMLKDFIDLKKGDTVAQNGANSAVGKHVIQICRILGIKTVNVVRSRDNLEELVKELKDLGADEVITQEELYSRKKKFPGVKLALNCVGGRSSLFLASLLDHGGCMVTYGGMSKQPVDCPTGPLIFKDISLRGFWMSRWYDIQKSPEKRHEMYQELAGWMKSGEIKKQEIVKNRLEDHAKALDTALSKFDKKQFFVLE</sequence>
<evidence type="ECO:0000250" key="1"/>
<evidence type="ECO:0000250" key="2">
    <source>
        <dbReference type="UniProtKB" id="Q8WZM3"/>
    </source>
</evidence>
<evidence type="ECO:0000250" key="3">
    <source>
        <dbReference type="UniProtKB" id="Q9BV79"/>
    </source>
</evidence>
<evidence type="ECO:0000250" key="4">
    <source>
        <dbReference type="UniProtKB" id="Q9DCS3"/>
    </source>
</evidence>
<evidence type="ECO:0000250" key="5">
    <source>
        <dbReference type="UniProtKB" id="Q9V6U9"/>
    </source>
</evidence>
<evidence type="ECO:0000255" key="6"/>
<evidence type="ECO:0000305" key="7"/>
<protein>
    <recommendedName>
        <fullName>Enoyl-[acyl-carrier-protein] reductase, mitochondrial</fullName>
        <ecNumber>1.3.1.104</ecNumber>
    </recommendedName>
    <alternativeName>
        <fullName>2-enoyl thioester reductase</fullName>
    </alternativeName>
</protein>
<organism>
    <name type="scientific">Caenorhabditis elegans</name>
    <dbReference type="NCBI Taxonomy" id="6239"/>
    <lineage>
        <taxon>Eukaryota</taxon>
        <taxon>Metazoa</taxon>
        <taxon>Ecdysozoa</taxon>
        <taxon>Nematoda</taxon>
        <taxon>Chromadorea</taxon>
        <taxon>Rhabditida</taxon>
        <taxon>Rhabditina</taxon>
        <taxon>Rhabditomorpha</taxon>
        <taxon>Rhabditoidea</taxon>
        <taxon>Rhabditidae</taxon>
        <taxon>Peloderinae</taxon>
        <taxon>Caenorhabditis</taxon>
    </lineage>
</organism>
<reference key="1">
    <citation type="journal article" date="1998" name="Science">
        <title>Genome sequence of the nematode C. elegans: a platform for investigating biology.</title>
        <authorList>
            <consortium name="The C. elegans sequencing consortium"/>
        </authorList>
    </citation>
    <scope>NUCLEOTIDE SEQUENCE [LARGE SCALE GENOMIC DNA]</scope>
    <source>
        <strain>Bristol N2</strain>
    </source>
</reference>
<proteinExistence type="inferred from homology"/>
<gene>
    <name type="ORF">W09H1.5</name>
</gene>
<dbReference type="EC" id="1.3.1.104"/>
<dbReference type="EMBL" id="Z82081">
    <property type="protein sequence ID" value="CAB04958.1"/>
    <property type="molecule type" value="Genomic_DNA"/>
</dbReference>
<dbReference type="PIR" id="T26323">
    <property type="entry name" value="T26323"/>
</dbReference>
<dbReference type="SMR" id="O45903"/>
<dbReference type="BioGRID" id="40259">
    <property type="interactions" value="7"/>
</dbReference>
<dbReference type="FunCoup" id="O45903">
    <property type="interactions" value="3290"/>
</dbReference>
<dbReference type="STRING" id="6239.W09H1.5.1"/>
<dbReference type="PaxDb" id="6239-W09H1.5"/>
<dbReference type="PeptideAtlas" id="O45903"/>
<dbReference type="EnsemblMetazoa" id="W09H1.5.1">
    <property type="protein sequence ID" value="W09H1.5.1"/>
    <property type="gene ID" value="WBGene00012375"/>
</dbReference>
<dbReference type="KEGG" id="cel:CELE_W09H1.5"/>
<dbReference type="UCSC" id="W09H1.5">
    <property type="organism name" value="c. elegans"/>
</dbReference>
<dbReference type="AGR" id="WB:WBGene00012375"/>
<dbReference type="CTD" id="174963"/>
<dbReference type="WormBase" id="W09H1.5">
    <property type="protein sequence ID" value="CE16575"/>
    <property type="gene ID" value="WBGene00012375"/>
    <property type="gene designation" value="mecr-1"/>
</dbReference>
<dbReference type="eggNOG" id="KOG0025">
    <property type="taxonomic scope" value="Eukaryota"/>
</dbReference>
<dbReference type="GeneTree" id="ENSGT00940000156592"/>
<dbReference type="HOGENOM" id="CLU_026673_17_1_1"/>
<dbReference type="InParanoid" id="O45903"/>
<dbReference type="OMA" id="QGFWMTQ"/>
<dbReference type="OrthoDB" id="7482721at2759"/>
<dbReference type="PhylomeDB" id="O45903"/>
<dbReference type="BRENDA" id="1.3.1.38">
    <property type="organism ID" value="1045"/>
</dbReference>
<dbReference type="Reactome" id="R-CEL-77346">
    <property type="pathway name" value="Beta oxidation of decanoyl-CoA to octanoyl-CoA-CoA"/>
</dbReference>
<dbReference type="PRO" id="PR:O45903"/>
<dbReference type="Proteomes" id="UP000001940">
    <property type="component" value="Chromosome II"/>
</dbReference>
<dbReference type="Bgee" id="WBGene00012375">
    <property type="expression patterns" value="Expressed in germ line (C elegans) and 4 other cell types or tissues"/>
</dbReference>
<dbReference type="GO" id="GO:0005739">
    <property type="term" value="C:mitochondrion"/>
    <property type="evidence" value="ECO:0000318"/>
    <property type="project" value="GO_Central"/>
</dbReference>
<dbReference type="GO" id="GO:0141148">
    <property type="term" value="F:enoyl-[acyl-carrier-protein] reductase (NADPH) activity"/>
    <property type="evidence" value="ECO:0007669"/>
    <property type="project" value="UniProtKB-EC"/>
</dbReference>
<dbReference type="GO" id="GO:0006633">
    <property type="term" value="P:fatty acid biosynthetic process"/>
    <property type="evidence" value="ECO:0007669"/>
    <property type="project" value="UniProtKB-KW"/>
</dbReference>
<dbReference type="GO" id="GO:0006631">
    <property type="term" value="P:fatty acid metabolic process"/>
    <property type="evidence" value="ECO:0000318"/>
    <property type="project" value="GO_Central"/>
</dbReference>
<dbReference type="CDD" id="cd08290">
    <property type="entry name" value="ETR"/>
    <property type="match status" value="1"/>
</dbReference>
<dbReference type="FunFam" id="3.40.50.720:FF:000112">
    <property type="entry name" value="Enoyl-[acyl-carrier-protein] reductase 1, mitochondrial"/>
    <property type="match status" value="1"/>
</dbReference>
<dbReference type="FunFam" id="3.90.180.10:FF:000010">
    <property type="entry name" value="Enoyl-[acyl-carrier-protein] reductase, mitochondrial"/>
    <property type="match status" value="1"/>
</dbReference>
<dbReference type="Gene3D" id="3.90.180.10">
    <property type="entry name" value="Medium-chain alcohol dehydrogenases, catalytic domain"/>
    <property type="match status" value="1"/>
</dbReference>
<dbReference type="Gene3D" id="3.40.50.720">
    <property type="entry name" value="NAD(P)-binding Rossmann-like Domain"/>
    <property type="match status" value="1"/>
</dbReference>
<dbReference type="InterPro" id="IPR013149">
    <property type="entry name" value="ADH-like_C"/>
</dbReference>
<dbReference type="InterPro" id="IPR013154">
    <property type="entry name" value="ADH-like_N"/>
</dbReference>
<dbReference type="InterPro" id="IPR011032">
    <property type="entry name" value="GroES-like_sf"/>
</dbReference>
<dbReference type="InterPro" id="IPR051034">
    <property type="entry name" value="Mito_Enoyl-ACP_Reductase"/>
</dbReference>
<dbReference type="InterPro" id="IPR036291">
    <property type="entry name" value="NAD(P)-bd_dom_sf"/>
</dbReference>
<dbReference type="InterPro" id="IPR020843">
    <property type="entry name" value="PKS_ER"/>
</dbReference>
<dbReference type="PANTHER" id="PTHR43981">
    <property type="entry name" value="ENOYL-[ACYL-CARRIER-PROTEIN] REDUCTASE, MITOCHONDRIAL"/>
    <property type="match status" value="1"/>
</dbReference>
<dbReference type="PANTHER" id="PTHR43981:SF2">
    <property type="entry name" value="ENOYL-[ACYL-CARRIER-PROTEIN] REDUCTASE, MITOCHONDRIAL"/>
    <property type="match status" value="1"/>
</dbReference>
<dbReference type="Pfam" id="PF08240">
    <property type="entry name" value="ADH_N"/>
    <property type="match status" value="1"/>
</dbReference>
<dbReference type="Pfam" id="PF00107">
    <property type="entry name" value="ADH_zinc_N"/>
    <property type="match status" value="1"/>
</dbReference>
<dbReference type="SMART" id="SM00829">
    <property type="entry name" value="PKS_ER"/>
    <property type="match status" value="1"/>
</dbReference>
<dbReference type="SUPFAM" id="SSF50129">
    <property type="entry name" value="GroES-like"/>
    <property type="match status" value="1"/>
</dbReference>
<dbReference type="SUPFAM" id="SSF51735">
    <property type="entry name" value="NAD(P)-binding Rossmann-fold domains"/>
    <property type="match status" value="1"/>
</dbReference>
<accession>O45903</accession>
<comment type="function">
    <text evidence="3 4 5">Catalyzes the NADPH-dependent reduction of trans-2-enoyl thioesters in mitochondrial fatty acid synthesis (fatty acid synthesis type II). Fatty acid chain elongation in mitochondria uses acyl carrier protein (ACP) as an acyl group carrier, but the enzyme accepts both ACP and CoA thioesters as substrates in vitro. May provide the octanoyl chain used for lipoic acid biosynthesis, regulating protein lipoylation and mitochondrial respiratory activity (By similarity). Involved in iron homeostasis; affecting Fe-S cluster assembly and ceramide metabolism (By similarity). Required for proper morphology and bioenergetic functions of mitochondria (By similarity). Required for maintenance of neurons (By similarity).</text>
</comment>
<comment type="catalytic activity">
    <reaction evidence="3">
        <text>a 2,3-saturated acyl-[ACP] + NADP(+) = a (2E)-enoyl-[ACP] + NADPH + H(+)</text>
        <dbReference type="Rhea" id="RHEA:22564"/>
        <dbReference type="Rhea" id="RHEA-COMP:9925"/>
        <dbReference type="Rhea" id="RHEA-COMP:9926"/>
        <dbReference type="ChEBI" id="CHEBI:15378"/>
        <dbReference type="ChEBI" id="CHEBI:57783"/>
        <dbReference type="ChEBI" id="CHEBI:58349"/>
        <dbReference type="ChEBI" id="CHEBI:78784"/>
        <dbReference type="ChEBI" id="CHEBI:78785"/>
        <dbReference type="EC" id="1.3.1.104"/>
    </reaction>
</comment>
<comment type="subunit">
    <text evidence="3">Homodimer.</text>
</comment>
<comment type="subcellular location">
    <subcellularLocation>
        <location evidence="3">Mitochondrion</location>
    </subcellularLocation>
</comment>
<comment type="similarity">
    <text evidence="7">Belongs to the zinc-containing alcohol dehydrogenase family. Quinone oxidoreductase subfamily.</text>
</comment>
<keyword id="KW-0275">Fatty acid biosynthesis</keyword>
<keyword id="KW-0276">Fatty acid metabolism</keyword>
<keyword id="KW-0444">Lipid biosynthesis</keyword>
<keyword id="KW-0443">Lipid metabolism</keyword>
<keyword id="KW-0496">Mitochondrion</keyword>
<keyword id="KW-0521">NADP</keyword>
<keyword id="KW-0560">Oxidoreductase</keyword>
<keyword id="KW-1185">Reference proteome</keyword>
<keyword id="KW-0809">Transit peptide</keyword>
<name>MECR1_CAEEL</name>